<organism>
    <name type="scientific">Mus musculus</name>
    <name type="common">Mouse</name>
    <dbReference type="NCBI Taxonomy" id="10090"/>
    <lineage>
        <taxon>Eukaryota</taxon>
        <taxon>Metazoa</taxon>
        <taxon>Chordata</taxon>
        <taxon>Craniata</taxon>
        <taxon>Vertebrata</taxon>
        <taxon>Euteleostomi</taxon>
        <taxon>Mammalia</taxon>
        <taxon>Eutheria</taxon>
        <taxon>Euarchontoglires</taxon>
        <taxon>Glires</taxon>
        <taxon>Rodentia</taxon>
        <taxon>Myomorpha</taxon>
        <taxon>Muroidea</taxon>
        <taxon>Muridae</taxon>
        <taxon>Murinae</taxon>
        <taxon>Mus</taxon>
        <taxon>Mus</taxon>
    </lineage>
</organism>
<proteinExistence type="evidence at transcript level"/>
<keyword id="KW-0143">Chaperone</keyword>
<keyword id="KW-0472">Membrane</keyword>
<keyword id="KW-1185">Reference proteome</keyword>
<keyword id="KW-0735">Signal-anchor</keyword>
<keyword id="KW-0812">Transmembrane</keyword>
<keyword id="KW-1133">Transmembrane helix</keyword>
<accession>Q9JMG2</accession>
<sequence>MLSESSSFLKGVMLGSIFCALITMLGHIRIGNRMHHHEHHHLQAPNKDDISKISEAERMELSKSFRVYCIVLVKPKDVSLWAAVKETWTKHCDKAEFFSSENVKVFESINMDTNDMWLMMRKAYKYAYDQYRDQYNWFFLARPTTFAVIENLKYFLLKKDQSQPFYLGHTVKSGDLEYVSVDGGIVLSIESMKRLNSLLSVPEKCPEQGGMIWKISEDKQLAVCLKYAGVFAENAEDADGKDVFNTKSVGLFIKEAMTNQPNQVVEGCCSDMAVTFNGLTPNQMHVMMYGVYRLRAFGHVFNDALVFLPPNGSEND</sequence>
<gene>
    <name type="primary">C1galt1c1</name>
    <name type="synonym">Cosmc</name>
</gene>
<reference key="1">
    <citation type="journal article" date="2000" name="Biochem. Biophys. Res. Commun.">
        <title>Growth suppression of Escherichia coli by induction of expression of mammalian genes with transmembrane or ATPase domains.</title>
        <authorList>
            <person name="Inoue S."/>
            <person name="Sano H."/>
            <person name="Ohta M."/>
        </authorList>
    </citation>
    <scope>NUCLEOTIDE SEQUENCE [MRNA]</scope>
    <source>
        <tissue>Brain</tissue>
    </source>
</reference>
<reference key="2">
    <citation type="journal article" date="2002" name="Proc. Natl. Acad. Sci. U.S.A.">
        <title>A unique molecular chaperone Cosmc required for activity of the mammalian core 1 beta 3-galactosyltransferase.</title>
        <authorList>
            <person name="Ju T."/>
            <person name="Cummings R.D."/>
        </authorList>
    </citation>
    <scope>NUCLEOTIDE SEQUENCE [MRNA]</scope>
</reference>
<reference key="3">
    <citation type="submission" date="2002-09" db="EMBL/GenBank/DDBJ databases">
        <title>Molecular cloning of a UDP-Gal: GalNAcalpha-peptide mouse beta1,3-galactosyltransferase (mC1Gal-T2), an enzyme synthesizing a core 1 structure of O-glycan.</title>
        <authorList>
            <person name="Kudo T."/>
            <person name="Takayama Y."/>
            <person name="Narimatsu H."/>
        </authorList>
    </citation>
    <scope>NUCLEOTIDE SEQUENCE [MRNA]</scope>
    <source>
        <strain>ICR</strain>
        <tissue>Liver</tissue>
    </source>
</reference>
<reference key="4">
    <citation type="journal article" date="2005" name="Science">
        <title>The transcriptional landscape of the mammalian genome.</title>
        <authorList>
            <person name="Carninci P."/>
            <person name="Kasukawa T."/>
            <person name="Katayama S."/>
            <person name="Gough J."/>
            <person name="Frith M.C."/>
            <person name="Maeda N."/>
            <person name="Oyama R."/>
            <person name="Ravasi T."/>
            <person name="Lenhard B."/>
            <person name="Wells C."/>
            <person name="Kodzius R."/>
            <person name="Shimokawa K."/>
            <person name="Bajic V.B."/>
            <person name="Brenner S.E."/>
            <person name="Batalov S."/>
            <person name="Forrest A.R."/>
            <person name="Zavolan M."/>
            <person name="Davis M.J."/>
            <person name="Wilming L.G."/>
            <person name="Aidinis V."/>
            <person name="Allen J.E."/>
            <person name="Ambesi-Impiombato A."/>
            <person name="Apweiler R."/>
            <person name="Aturaliya R.N."/>
            <person name="Bailey T.L."/>
            <person name="Bansal M."/>
            <person name="Baxter L."/>
            <person name="Beisel K.W."/>
            <person name="Bersano T."/>
            <person name="Bono H."/>
            <person name="Chalk A.M."/>
            <person name="Chiu K.P."/>
            <person name="Choudhary V."/>
            <person name="Christoffels A."/>
            <person name="Clutterbuck D.R."/>
            <person name="Crowe M.L."/>
            <person name="Dalla E."/>
            <person name="Dalrymple B.P."/>
            <person name="de Bono B."/>
            <person name="Della Gatta G."/>
            <person name="di Bernardo D."/>
            <person name="Down T."/>
            <person name="Engstrom P."/>
            <person name="Fagiolini M."/>
            <person name="Faulkner G."/>
            <person name="Fletcher C.F."/>
            <person name="Fukushima T."/>
            <person name="Furuno M."/>
            <person name="Futaki S."/>
            <person name="Gariboldi M."/>
            <person name="Georgii-Hemming P."/>
            <person name="Gingeras T.R."/>
            <person name="Gojobori T."/>
            <person name="Green R.E."/>
            <person name="Gustincich S."/>
            <person name="Harbers M."/>
            <person name="Hayashi Y."/>
            <person name="Hensch T.K."/>
            <person name="Hirokawa N."/>
            <person name="Hill D."/>
            <person name="Huminiecki L."/>
            <person name="Iacono M."/>
            <person name="Ikeo K."/>
            <person name="Iwama A."/>
            <person name="Ishikawa T."/>
            <person name="Jakt M."/>
            <person name="Kanapin A."/>
            <person name="Katoh M."/>
            <person name="Kawasawa Y."/>
            <person name="Kelso J."/>
            <person name="Kitamura H."/>
            <person name="Kitano H."/>
            <person name="Kollias G."/>
            <person name="Krishnan S.P."/>
            <person name="Kruger A."/>
            <person name="Kummerfeld S.K."/>
            <person name="Kurochkin I.V."/>
            <person name="Lareau L.F."/>
            <person name="Lazarevic D."/>
            <person name="Lipovich L."/>
            <person name="Liu J."/>
            <person name="Liuni S."/>
            <person name="McWilliam S."/>
            <person name="Madan Babu M."/>
            <person name="Madera M."/>
            <person name="Marchionni L."/>
            <person name="Matsuda H."/>
            <person name="Matsuzawa S."/>
            <person name="Miki H."/>
            <person name="Mignone F."/>
            <person name="Miyake S."/>
            <person name="Morris K."/>
            <person name="Mottagui-Tabar S."/>
            <person name="Mulder N."/>
            <person name="Nakano N."/>
            <person name="Nakauchi H."/>
            <person name="Ng P."/>
            <person name="Nilsson R."/>
            <person name="Nishiguchi S."/>
            <person name="Nishikawa S."/>
            <person name="Nori F."/>
            <person name="Ohara O."/>
            <person name="Okazaki Y."/>
            <person name="Orlando V."/>
            <person name="Pang K.C."/>
            <person name="Pavan W.J."/>
            <person name="Pavesi G."/>
            <person name="Pesole G."/>
            <person name="Petrovsky N."/>
            <person name="Piazza S."/>
            <person name="Reed J."/>
            <person name="Reid J.F."/>
            <person name="Ring B.Z."/>
            <person name="Ringwald M."/>
            <person name="Rost B."/>
            <person name="Ruan Y."/>
            <person name="Salzberg S.L."/>
            <person name="Sandelin A."/>
            <person name="Schneider C."/>
            <person name="Schoenbach C."/>
            <person name="Sekiguchi K."/>
            <person name="Semple C.A."/>
            <person name="Seno S."/>
            <person name="Sessa L."/>
            <person name="Sheng Y."/>
            <person name="Shibata Y."/>
            <person name="Shimada H."/>
            <person name="Shimada K."/>
            <person name="Silva D."/>
            <person name="Sinclair B."/>
            <person name="Sperling S."/>
            <person name="Stupka E."/>
            <person name="Sugiura K."/>
            <person name="Sultana R."/>
            <person name="Takenaka Y."/>
            <person name="Taki K."/>
            <person name="Tammoja K."/>
            <person name="Tan S.L."/>
            <person name="Tang S."/>
            <person name="Taylor M.S."/>
            <person name="Tegner J."/>
            <person name="Teichmann S.A."/>
            <person name="Ueda H.R."/>
            <person name="van Nimwegen E."/>
            <person name="Verardo R."/>
            <person name="Wei C.L."/>
            <person name="Yagi K."/>
            <person name="Yamanishi H."/>
            <person name="Zabarovsky E."/>
            <person name="Zhu S."/>
            <person name="Zimmer A."/>
            <person name="Hide W."/>
            <person name="Bult C."/>
            <person name="Grimmond S.M."/>
            <person name="Teasdale R.D."/>
            <person name="Liu E.T."/>
            <person name="Brusic V."/>
            <person name="Quackenbush J."/>
            <person name="Wahlestedt C."/>
            <person name="Mattick J.S."/>
            <person name="Hume D.A."/>
            <person name="Kai C."/>
            <person name="Sasaki D."/>
            <person name="Tomaru Y."/>
            <person name="Fukuda S."/>
            <person name="Kanamori-Katayama M."/>
            <person name="Suzuki M."/>
            <person name="Aoki J."/>
            <person name="Arakawa T."/>
            <person name="Iida J."/>
            <person name="Imamura K."/>
            <person name="Itoh M."/>
            <person name="Kato T."/>
            <person name="Kawaji H."/>
            <person name="Kawagashira N."/>
            <person name="Kawashima T."/>
            <person name="Kojima M."/>
            <person name="Kondo S."/>
            <person name="Konno H."/>
            <person name="Nakano K."/>
            <person name="Ninomiya N."/>
            <person name="Nishio T."/>
            <person name="Okada M."/>
            <person name="Plessy C."/>
            <person name="Shibata K."/>
            <person name="Shiraki T."/>
            <person name="Suzuki S."/>
            <person name="Tagami M."/>
            <person name="Waki K."/>
            <person name="Watahiki A."/>
            <person name="Okamura-Oho Y."/>
            <person name="Suzuki H."/>
            <person name="Kawai J."/>
            <person name="Hayashizaki Y."/>
        </authorList>
    </citation>
    <scope>NUCLEOTIDE SEQUENCE [LARGE SCALE MRNA]</scope>
    <source>
        <strain>C57BL/6J</strain>
        <tissue>Small intestine</tissue>
    </source>
</reference>
<reference key="5">
    <citation type="journal article" date="2009" name="PLoS Biol.">
        <title>Lineage-specific biology revealed by a finished genome assembly of the mouse.</title>
        <authorList>
            <person name="Church D.M."/>
            <person name="Goodstadt L."/>
            <person name="Hillier L.W."/>
            <person name="Zody M.C."/>
            <person name="Goldstein S."/>
            <person name="She X."/>
            <person name="Bult C.J."/>
            <person name="Agarwala R."/>
            <person name="Cherry J.L."/>
            <person name="DiCuccio M."/>
            <person name="Hlavina W."/>
            <person name="Kapustin Y."/>
            <person name="Meric P."/>
            <person name="Maglott D."/>
            <person name="Birtle Z."/>
            <person name="Marques A.C."/>
            <person name="Graves T."/>
            <person name="Zhou S."/>
            <person name="Teague B."/>
            <person name="Potamousis K."/>
            <person name="Churas C."/>
            <person name="Place M."/>
            <person name="Herschleb J."/>
            <person name="Runnheim R."/>
            <person name="Forrest D."/>
            <person name="Amos-Landgraf J."/>
            <person name="Schwartz D.C."/>
            <person name="Cheng Z."/>
            <person name="Lindblad-Toh K."/>
            <person name="Eichler E.E."/>
            <person name="Ponting C.P."/>
        </authorList>
    </citation>
    <scope>NUCLEOTIDE SEQUENCE [LARGE SCALE GENOMIC DNA]</scope>
    <source>
        <strain>C57BL/6J</strain>
    </source>
</reference>
<reference key="6">
    <citation type="journal article" date="2004" name="Genome Res.">
        <title>The status, quality, and expansion of the NIH full-length cDNA project: the Mammalian Gene Collection (MGC).</title>
        <authorList>
            <consortium name="The MGC Project Team"/>
        </authorList>
    </citation>
    <scope>NUCLEOTIDE SEQUENCE [LARGE SCALE MRNA]</scope>
    <source>
        <strain>129</strain>
        <tissue>Mammary tumor</tissue>
    </source>
</reference>
<evidence type="ECO:0000250" key="1"/>
<evidence type="ECO:0000255" key="2"/>
<evidence type="ECO:0000305" key="3"/>
<protein>
    <recommendedName>
        <fullName>C1GALT1-specific chaperone 1</fullName>
    </recommendedName>
    <alternativeName>
        <fullName>Core 1 beta1,3-galactosyltransferase 2</fullName>
        <shortName>C1Gal-T2</shortName>
        <shortName>C1GalT2</shortName>
        <shortName>Core 1 beta3-Gal-T2</shortName>
        <shortName>mC1Gal-T2</shortName>
    </alternativeName>
    <alternativeName>
        <fullName>Core 1 beta3-galactosyltransferase-specific molecular chaperone</fullName>
    </alternativeName>
</protein>
<dbReference type="EMBL" id="AB030184">
    <property type="protein sequence ID" value="BAA92748.1"/>
    <property type="molecule type" value="mRNA"/>
</dbReference>
<dbReference type="EMBL" id="AY159320">
    <property type="protein sequence ID" value="AAN78130.1"/>
    <property type="molecule type" value="mRNA"/>
</dbReference>
<dbReference type="EMBL" id="AB091728">
    <property type="protein sequence ID" value="BAD13521.1"/>
    <property type="molecule type" value="mRNA"/>
</dbReference>
<dbReference type="EMBL" id="AK008040">
    <property type="protein sequence ID" value="BAB25426.1"/>
    <property type="molecule type" value="mRNA"/>
</dbReference>
<dbReference type="EMBL" id="AL590633">
    <property type="status" value="NOT_ANNOTATED_CDS"/>
    <property type="molecule type" value="Genomic_DNA"/>
</dbReference>
<dbReference type="EMBL" id="BC029909">
    <property type="protein sequence ID" value="AAH29909.1"/>
    <property type="molecule type" value="mRNA"/>
</dbReference>
<dbReference type="CCDS" id="CCDS30095.1"/>
<dbReference type="RefSeq" id="NP_067525.1">
    <property type="nucleotide sequence ID" value="NM_021550.3"/>
</dbReference>
<dbReference type="SMR" id="Q9JMG2"/>
<dbReference type="BioGRID" id="208512">
    <property type="interactions" value="3"/>
</dbReference>
<dbReference type="FunCoup" id="Q9JMG2">
    <property type="interactions" value="176"/>
</dbReference>
<dbReference type="STRING" id="10090.ENSMUSP00000059224"/>
<dbReference type="CAZy" id="GT31">
    <property type="family name" value="Glycosyltransferase Family 31"/>
</dbReference>
<dbReference type="iPTMnet" id="Q9JMG2"/>
<dbReference type="PhosphoSitePlus" id="Q9JMG2"/>
<dbReference type="PaxDb" id="10090-ENSMUSP00000059224"/>
<dbReference type="PeptideAtlas" id="Q9JMG2"/>
<dbReference type="ProteomicsDB" id="273724"/>
<dbReference type="Pumba" id="Q9JMG2"/>
<dbReference type="Antibodypedia" id="545">
    <property type="antibodies" value="88 antibodies from 25 providers"/>
</dbReference>
<dbReference type="DNASU" id="59048"/>
<dbReference type="Ensembl" id="ENSMUST00000058265.8">
    <property type="protein sequence ID" value="ENSMUSP00000059224.8"/>
    <property type="gene ID" value="ENSMUSG00000048970.10"/>
</dbReference>
<dbReference type="GeneID" id="59048"/>
<dbReference type="KEGG" id="mmu:59048"/>
<dbReference type="UCSC" id="uc009tag.2">
    <property type="organism name" value="mouse"/>
</dbReference>
<dbReference type="AGR" id="MGI:1913493"/>
<dbReference type="CTD" id="29071"/>
<dbReference type="MGI" id="MGI:1913493">
    <property type="gene designation" value="C1galt1c1"/>
</dbReference>
<dbReference type="VEuPathDB" id="HostDB:ENSMUSG00000048970"/>
<dbReference type="eggNOG" id="KOG2246">
    <property type="taxonomic scope" value="Eukaryota"/>
</dbReference>
<dbReference type="GeneTree" id="ENSGT00940000155145"/>
<dbReference type="HOGENOM" id="CLU_874237_0_0_1"/>
<dbReference type="InParanoid" id="Q9JMG2"/>
<dbReference type="OMA" id="WVMMRKA"/>
<dbReference type="OrthoDB" id="414175at2759"/>
<dbReference type="PhylomeDB" id="Q9JMG2"/>
<dbReference type="TreeFam" id="TF317293"/>
<dbReference type="Reactome" id="R-MMU-913709">
    <property type="pathway name" value="O-linked glycosylation of mucins"/>
</dbReference>
<dbReference type="BioGRID-ORCS" id="59048">
    <property type="hits" value="4 hits in 78 CRISPR screens"/>
</dbReference>
<dbReference type="ChiTaRS" id="C1galt1c1">
    <property type="organism name" value="mouse"/>
</dbReference>
<dbReference type="PRO" id="PR:Q9JMG2"/>
<dbReference type="Proteomes" id="UP000000589">
    <property type="component" value="Chromosome X"/>
</dbReference>
<dbReference type="RNAct" id="Q9JMG2">
    <property type="molecule type" value="protein"/>
</dbReference>
<dbReference type="Bgee" id="ENSMUSG00000048970">
    <property type="expression patterns" value="Expressed in choroid plexus epithelium and 244 other cell types or tissues"/>
</dbReference>
<dbReference type="GO" id="GO:0016020">
    <property type="term" value="C:membrane"/>
    <property type="evidence" value="ECO:0007669"/>
    <property type="project" value="UniProtKB-SubCell"/>
</dbReference>
<dbReference type="GO" id="GO:0030168">
    <property type="term" value="P:platelet activation"/>
    <property type="evidence" value="ECO:0000315"/>
    <property type="project" value="MGI"/>
</dbReference>
<dbReference type="GO" id="GO:0036344">
    <property type="term" value="P:platelet morphogenesis"/>
    <property type="evidence" value="ECO:0000315"/>
    <property type="project" value="MGI"/>
</dbReference>
<dbReference type="GO" id="GO:0006493">
    <property type="term" value="P:protein O-linked glycosylation"/>
    <property type="evidence" value="ECO:0000315"/>
    <property type="project" value="MGI"/>
</dbReference>
<dbReference type="FunFam" id="3.90.550.50:FF:000016">
    <property type="entry name" value="C1GALT1-specific chaperone 1"/>
    <property type="match status" value="1"/>
</dbReference>
<dbReference type="Gene3D" id="3.90.550.50">
    <property type="match status" value="1"/>
</dbReference>
<dbReference type="InterPro" id="IPR026050">
    <property type="entry name" value="C1GALT1/C1GALT1_chp1"/>
</dbReference>
<dbReference type="PANTHER" id="PTHR23033">
    <property type="entry name" value="BETA1,3-GALACTOSYLTRANSFERASE"/>
    <property type="match status" value="1"/>
</dbReference>
<dbReference type="PANTHER" id="PTHR23033:SF2">
    <property type="entry name" value="C1GALT1-SPECIFIC CHAPERONE 1"/>
    <property type="match status" value="1"/>
</dbReference>
<feature type="chain" id="PRO_0000285075" description="C1GALT1-specific chaperone 1">
    <location>
        <begin position="1"/>
        <end position="316"/>
    </location>
</feature>
<feature type="topological domain" description="Cytoplasmic" evidence="2">
    <location>
        <begin position="1"/>
        <end position="6"/>
    </location>
</feature>
<feature type="transmembrane region" description="Helical; Signal-anchor for type II membrane protein" evidence="2">
    <location>
        <begin position="7"/>
        <end position="26"/>
    </location>
</feature>
<feature type="topological domain" description="Lumenal" evidence="2">
    <location>
        <begin position="27"/>
        <end position="316"/>
    </location>
</feature>
<name>C1GLC_MOUSE</name>
<comment type="function">
    <text evidence="1">Probable chaperone required for the generation of 1 O-glycan Gal-beta1-3GalNAc-alpha1-Ser/Thr (T antigen), which is a precursor for many extended O-glycans in glycoproteins. Probably acts as a specific molecular chaperone assisting the folding/stability of core 1 beta-3-galactosyltransferase (C1GALT1) (By similarity).</text>
</comment>
<comment type="subunit">
    <text evidence="1">Associates with core 1 beta-3-galactosyltransferase (C1GALT1), probably not with the soluble active form.</text>
</comment>
<comment type="subcellular location">
    <subcellularLocation>
        <location evidence="3">Membrane</location>
        <topology evidence="3">Single-pass type II membrane protein</topology>
    </subcellularLocation>
</comment>
<comment type="similarity">
    <text evidence="3">Belongs to the glycosyltransferase 31 family. Beta3-Gal-T subfamily.</text>
</comment>
<comment type="caution">
    <text evidence="3">Was originally assigned to be a glycosyltransferase.</text>
</comment>
<comment type="online information" name="Functional Glycomics Gateway - GTase">
    <link uri="http://www.functionalglycomics.org/glycomics/molecule/jsp/glycoEnzyme/viewGlycoEnzyme.jsp?gbpId=gt_mou_467"/>
    <text>C1GALT2 (same seq as COSMC)</text>
</comment>